<comment type="function">
    <text evidence="1">Component of the dark-operative protochlorophyllide reductase (DPOR) that uses Mg-ATP and reduced ferredoxin to reduce ring D of protochlorophyllide (Pchlide) to form chlorophyllide a (Chlide). This reaction is light-independent. The NB-protein (BchN-BchB) is the catalytic component of the complex.</text>
</comment>
<comment type="catalytic activity">
    <reaction evidence="1">
        <text>chlorophyllide a + oxidized 2[4Fe-4S]-[ferredoxin] + 2 ADP + 2 phosphate = protochlorophyllide a + reduced 2[4Fe-4S]-[ferredoxin] + 2 ATP + 2 H2O</text>
        <dbReference type="Rhea" id="RHEA:28202"/>
        <dbReference type="Rhea" id="RHEA-COMP:10002"/>
        <dbReference type="Rhea" id="RHEA-COMP:10004"/>
        <dbReference type="ChEBI" id="CHEBI:15377"/>
        <dbReference type="ChEBI" id="CHEBI:30616"/>
        <dbReference type="ChEBI" id="CHEBI:33722"/>
        <dbReference type="ChEBI" id="CHEBI:33723"/>
        <dbReference type="ChEBI" id="CHEBI:43474"/>
        <dbReference type="ChEBI" id="CHEBI:83348"/>
        <dbReference type="ChEBI" id="CHEBI:83350"/>
        <dbReference type="ChEBI" id="CHEBI:456216"/>
        <dbReference type="EC" id="1.3.7.7"/>
    </reaction>
</comment>
<comment type="cofactor">
    <cofactor evidence="1">
        <name>[4Fe-4S] cluster</name>
        <dbReference type="ChEBI" id="CHEBI:49883"/>
    </cofactor>
    <text evidence="1">Binds 1 [4Fe-4S] cluster per heterodimer. The cluster is bound at the heterodimer interface by residues from both subunits.</text>
</comment>
<comment type="pathway">
    <text evidence="1">Porphyrin-containing compound metabolism; bacteriochlorophyll biosynthesis (light-independent).</text>
</comment>
<comment type="subunit">
    <text evidence="1">Protochlorophyllide reductase is composed of three subunits; BchL, BchN and BchB. Forms a heterotetramer of two BchB and two BchN subunits.</text>
</comment>
<comment type="similarity">
    <text evidence="1">Belongs to the BchN/ChlN family.</text>
</comment>
<sequence>MNARAEGCTAAPDPSSRVVRHERGQHEVFCGLTGIVWLHRKIQDAFFLVVGSRTCAHLIQSAAGVMIFAEPRFGTAIMEEKDLAGLTDANDELDRIVTQLIARRPDIKLLFLVGSCPSEVIKLDLSRAALRLSQRFSPAVRVLSYSGSGLETTFTQGEDACLASLVPVLPASTGTEASLLVVGSLADVVEDQFIRLFDGLGIGSVQFFPPRNSGSMPSVGPNTKFLLAQPFLPDTARELEHRGAKRLAAPFPLGVEGTTGWLRAAANAFGVDEALFDKVTQPARVRAERALDKFRKELSGRRLFFFPDSQLEIPLARFLSRELSMELVEVGTPYLHREHLAEELKLLPADAAITEGQDVDLQLDRCREARPDIVVCGLGLANPLEAEGMTTKWAIELVFTPIQGYDQASDLAELFARPLVRRAKLVA</sequence>
<accession>Q07RY5</accession>
<keyword id="KW-0004">4Fe-4S</keyword>
<keyword id="KW-0067">ATP-binding</keyword>
<keyword id="KW-0077">Bacteriochlorophyll biosynthesis</keyword>
<keyword id="KW-0149">Chlorophyll biosynthesis</keyword>
<keyword id="KW-0408">Iron</keyword>
<keyword id="KW-0411">Iron-sulfur</keyword>
<keyword id="KW-0479">Metal-binding</keyword>
<keyword id="KW-0547">Nucleotide-binding</keyword>
<keyword id="KW-0560">Oxidoreductase</keyword>
<keyword id="KW-0602">Photosynthesis</keyword>
<proteinExistence type="inferred from homology"/>
<gene>
    <name evidence="1" type="primary">bchN</name>
    <name type="ordered locus">RPE_1347</name>
</gene>
<feature type="chain" id="PRO_0000324020" description="Light-independent protochlorophyllide reductase subunit N">
    <location>
        <begin position="1"/>
        <end position="427"/>
    </location>
</feature>
<feature type="binding site" evidence="1">
    <location>
        <position position="30"/>
    </location>
    <ligand>
        <name>[4Fe-4S] cluster</name>
        <dbReference type="ChEBI" id="CHEBI:49883"/>
        <note>ligand shared with heterodimeric partner</note>
    </ligand>
</feature>
<feature type="binding site" evidence="1">
    <location>
        <position position="55"/>
    </location>
    <ligand>
        <name>[4Fe-4S] cluster</name>
        <dbReference type="ChEBI" id="CHEBI:49883"/>
        <note>ligand shared with heterodimeric partner</note>
    </ligand>
</feature>
<feature type="binding site" evidence="1">
    <location>
        <position position="116"/>
    </location>
    <ligand>
        <name>[4Fe-4S] cluster</name>
        <dbReference type="ChEBI" id="CHEBI:49883"/>
        <note>ligand shared with heterodimeric partner</note>
    </ligand>
</feature>
<reference key="1">
    <citation type="submission" date="2006-09" db="EMBL/GenBank/DDBJ databases">
        <title>Complete sequence of Rhodopseudomonas palustris BisA53.</title>
        <authorList>
            <consortium name="US DOE Joint Genome Institute"/>
            <person name="Copeland A."/>
            <person name="Lucas S."/>
            <person name="Lapidus A."/>
            <person name="Barry K."/>
            <person name="Detter J.C."/>
            <person name="Glavina del Rio T."/>
            <person name="Hammon N."/>
            <person name="Israni S."/>
            <person name="Dalin E."/>
            <person name="Tice H."/>
            <person name="Pitluck S."/>
            <person name="Chain P."/>
            <person name="Malfatti S."/>
            <person name="Shin M."/>
            <person name="Vergez L."/>
            <person name="Schmutz J."/>
            <person name="Larimer F."/>
            <person name="Land M."/>
            <person name="Hauser L."/>
            <person name="Pelletier D.A."/>
            <person name="Kyrpides N."/>
            <person name="Kim E."/>
            <person name="Harwood C.S."/>
            <person name="Oda Y."/>
            <person name="Richardson P."/>
        </authorList>
    </citation>
    <scope>NUCLEOTIDE SEQUENCE [LARGE SCALE GENOMIC DNA]</scope>
    <source>
        <strain>BisA53</strain>
    </source>
</reference>
<evidence type="ECO:0000255" key="1">
    <source>
        <dbReference type="HAMAP-Rule" id="MF_00352"/>
    </source>
</evidence>
<name>BCHN_RHOP5</name>
<protein>
    <recommendedName>
        <fullName evidence="1">Light-independent protochlorophyllide reductase subunit N</fullName>
        <shortName evidence="1">DPOR subunit N</shortName>
        <shortName evidence="1">LI-POR subunit N</shortName>
        <ecNumber evidence="1">1.3.7.7</ecNumber>
    </recommendedName>
</protein>
<dbReference type="EC" id="1.3.7.7" evidence="1"/>
<dbReference type="EMBL" id="CP000463">
    <property type="protein sequence ID" value="ABJ05299.1"/>
    <property type="molecule type" value="Genomic_DNA"/>
</dbReference>
<dbReference type="SMR" id="Q07RY5"/>
<dbReference type="STRING" id="316055.RPE_1347"/>
<dbReference type="KEGG" id="rpe:RPE_1347"/>
<dbReference type="eggNOG" id="COG2710">
    <property type="taxonomic scope" value="Bacteria"/>
</dbReference>
<dbReference type="HOGENOM" id="CLU_037170_0_0_5"/>
<dbReference type="OrthoDB" id="5714774at2"/>
<dbReference type="UniPathway" id="UPA00671"/>
<dbReference type="GO" id="GO:0051539">
    <property type="term" value="F:4 iron, 4 sulfur cluster binding"/>
    <property type="evidence" value="ECO:0007669"/>
    <property type="project" value="UniProtKB-UniRule"/>
</dbReference>
<dbReference type="GO" id="GO:0005524">
    <property type="term" value="F:ATP binding"/>
    <property type="evidence" value="ECO:0007669"/>
    <property type="project" value="UniProtKB-UniRule"/>
</dbReference>
<dbReference type="GO" id="GO:0046872">
    <property type="term" value="F:metal ion binding"/>
    <property type="evidence" value="ECO:0007669"/>
    <property type="project" value="UniProtKB-KW"/>
</dbReference>
<dbReference type="GO" id="GO:0016730">
    <property type="term" value="F:oxidoreductase activity, acting on iron-sulfur proteins as donors"/>
    <property type="evidence" value="ECO:0007669"/>
    <property type="project" value="InterPro"/>
</dbReference>
<dbReference type="GO" id="GO:0016636">
    <property type="term" value="F:oxidoreductase activity, acting on the CH-CH group of donors, iron-sulfur protein as acceptor"/>
    <property type="evidence" value="ECO:0007669"/>
    <property type="project" value="UniProtKB-UniRule"/>
</dbReference>
<dbReference type="GO" id="GO:0036070">
    <property type="term" value="P:light-independent bacteriochlorophyll biosynthetic process"/>
    <property type="evidence" value="ECO:0007669"/>
    <property type="project" value="UniProtKB-UniRule"/>
</dbReference>
<dbReference type="GO" id="GO:0019685">
    <property type="term" value="P:photosynthesis, dark reaction"/>
    <property type="evidence" value="ECO:0007669"/>
    <property type="project" value="InterPro"/>
</dbReference>
<dbReference type="Gene3D" id="3.40.50.1980">
    <property type="entry name" value="Nitrogenase molybdenum iron protein domain"/>
    <property type="match status" value="3"/>
</dbReference>
<dbReference type="HAMAP" id="MF_00352">
    <property type="entry name" value="ChlN_BchN"/>
    <property type="match status" value="1"/>
</dbReference>
<dbReference type="InterPro" id="IPR050293">
    <property type="entry name" value="LIPOR_BchN/ChlN"/>
</dbReference>
<dbReference type="InterPro" id="IPR000510">
    <property type="entry name" value="Nase/OxRdtase_comp1"/>
</dbReference>
<dbReference type="InterPro" id="IPR005970">
    <property type="entry name" value="Protochl_reductN"/>
</dbReference>
<dbReference type="NCBIfam" id="TIGR01279">
    <property type="entry name" value="DPOR_bchN"/>
    <property type="match status" value="1"/>
</dbReference>
<dbReference type="NCBIfam" id="NF002768">
    <property type="entry name" value="PRK02842.1"/>
    <property type="match status" value="1"/>
</dbReference>
<dbReference type="PANTHER" id="PTHR39429">
    <property type="entry name" value="LIGHT-INDEPENDENT PROTOCHLOROPHYLLIDE REDUCTASE SUBUNIT N"/>
    <property type="match status" value="1"/>
</dbReference>
<dbReference type="PANTHER" id="PTHR39429:SF3">
    <property type="entry name" value="LIGHT-INDEPENDENT PROTOCHLOROPHYLLIDE REDUCTASE SUBUNIT N"/>
    <property type="match status" value="1"/>
</dbReference>
<dbReference type="Pfam" id="PF00148">
    <property type="entry name" value="Oxidored_nitro"/>
    <property type="match status" value="1"/>
</dbReference>
<dbReference type="PIRSF" id="PIRSF000162">
    <property type="entry name" value="P_chlorophyll_rd"/>
    <property type="match status" value="1"/>
</dbReference>
<dbReference type="SUPFAM" id="SSF53807">
    <property type="entry name" value="Helical backbone' metal receptor"/>
    <property type="match status" value="1"/>
</dbReference>
<organism>
    <name type="scientific">Rhodopseudomonas palustris (strain BisA53)</name>
    <dbReference type="NCBI Taxonomy" id="316055"/>
    <lineage>
        <taxon>Bacteria</taxon>
        <taxon>Pseudomonadati</taxon>
        <taxon>Pseudomonadota</taxon>
        <taxon>Alphaproteobacteria</taxon>
        <taxon>Hyphomicrobiales</taxon>
        <taxon>Nitrobacteraceae</taxon>
        <taxon>Rhodopseudomonas</taxon>
    </lineage>
</organism>